<organism>
    <name type="scientific">Drosophila melanogaster</name>
    <name type="common">Fruit fly</name>
    <dbReference type="NCBI Taxonomy" id="7227"/>
    <lineage>
        <taxon>Eukaryota</taxon>
        <taxon>Metazoa</taxon>
        <taxon>Ecdysozoa</taxon>
        <taxon>Arthropoda</taxon>
        <taxon>Hexapoda</taxon>
        <taxon>Insecta</taxon>
        <taxon>Pterygota</taxon>
        <taxon>Neoptera</taxon>
        <taxon>Endopterygota</taxon>
        <taxon>Diptera</taxon>
        <taxon>Brachycera</taxon>
        <taxon>Muscomorpha</taxon>
        <taxon>Ephydroidea</taxon>
        <taxon>Drosophilidae</taxon>
        <taxon>Drosophila</taxon>
        <taxon>Sophophora</taxon>
    </lineage>
</organism>
<name>SMBT_DROME</name>
<reference evidence="10" key="1">
    <citation type="journal article" date="2000" name="Science">
        <title>The genome sequence of Drosophila melanogaster.</title>
        <authorList>
            <person name="Adams M.D."/>
            <person name="Celniker S.E."/>
            <person name="Holt R.A."/>
            <person name="Evans C.A."/>
            <person name="Gocayne J.D."/>
            <person name="Amanatides P.G."/>
            <person name="Scherer S.E."/>
            <person name="Li P.W."/>
            <person name="Hoskins R.A."/>
            <person name="Galle R.F."/>
            <person name="George R.A."/>
            <person name="Lewis S.E."/>
            <person name="Richards S."/>
            <person name="Ashburner M."/>
            <person name="Henderson S.N."/>
            <person name="Sutton G.G."/>
            <person name="Wortman J.R."/>
            <person name="Yandell M.D."/>
            <person name="Zhang Q."/>
            <person name="Chen L.X."/>
            <person name="Brandon R.C."/>
            <person name="Rogers Y.-H.C."/>
            <person name="Blazej R.G."/>
            <person name="Champe M."/>
            <person name="Pfeiffer B.D."/>
            <person name="Wan K.H."/>
            <person name="Doyle C."/>
            <person name="Baxter E.G."/>
            <person name="Helt G."/>
            <person name="Nelson C.R."/>
            <person name="Miklos G.L.G."/>
            <person name="Abril J.F."/>
            <person name="Agbayani A."/>
            <person name="An H.-J."/>
            <person name="Andrews-Pfannkoch C."/>
            <person name="Baldwin D."/>
            <person name="Ballew R.M."/>
            <person name="Basu A."/>
            <person name="Baxendale J."/>
            <person name="Bayraktaroglu L."/>
            <person name="Beasley E.M."/>
            <person name="Beeson K.Y."/>
            <person name="Benos P.V."/>
            <person name="Berman B.P."/>
            <person name="Bhandari D."/>
            <person name="Bolshakov S."/>
            <person name="Borkova D."/>
            <person name="Botchan M.R."/>
            <person name="Bouck J."/>
            <person name="Brokstein P."/>
            <person name="Brottier P."/>
            <person name="Burtis K.C."/>
            <person name="Busam D.A."/>
            <person name="Butler H."/>
            <person name="Cadieu E."/>
            <person name="Center A."/>
            <person name="Chandra I."/>
            <person name="Cherry J.M."/>
            <person name="Cawley S."/>
            <person name="Dahlke C."/>
            <person name="Davenport L.B."/>
            <person name="Davies P."/>
            <person name="de Pablos B."/>
            <person name="Delcher A."/>
            <person name="Deng Z."/>
            <person name="Mays A.D."/>
            <person name="Dew I."/>
            <person name="Dietz S.M."/>
            <person name="Dodson K."/>
            <person name="Doup L.E."/>
            <person name="Downes M."/>
            <person name="Dugan-Rocha S."/>
            <person name="Dunkov B.C."/>
            <person name="Dunn P."/>
            <person name="Durbin K.J."/>
            <person name="Evangelista C.C."/>
            <person name="Ferraz C."/>
            <person name="Ferriera S."/>
            <person name="Fleischmann W."/>
            <person name="Fosler C."/>
            <person name="Gabrielian A.E."/>
            <person name="Garg N.S."/>
            <person name="Gelbart W.M."/>
            <person name="Glasser K."/>
            <person name="Glodek A."/>
            <person name="Gong F."/>
            <person name="Gorrell J.H."/>
            <person name="Gu Z."/>
            <person name="Guan P."/>
            <person name="Harris M."/>
            <person name="Harris N.L."/>
            <person name="Harvey D.A."/>
            <person name="Heiman T.J."/>
            <person name="Hernandez J.R."/>
            <person name="Houck J."/>
            <person name="Hostin D."/>
            <person name="Houston K.A."/>
            <person name="Howland T.J."/>
            <person name="Wei M.-H."/>
            <person name="Ibegwam C."/>
            <person name="Jalali M."/>
            <person name="Kalush F."/>
            <person name="Karpen G.H."/>
            <person name="Ke Z."/>
            <person name="Kennison J.A."/>
            <person name="Ketchum K.A."/>
            <person name="Kimmel B.E."/>
            <person name="Kodira C.D."/>
            <person name="Kraft C.L."/>
            <person name="Kravitz S."/>
            <person name="Kulp D."/>
            <person name="Lai Z."/>
            <person name="Lasko P."/>
            <person name="Lei Y."/>
            <person name="Levitsky A.A."/>
            <person name="Li J.H."/>
            <person name="Li Z."/>
            <person name="Liang Y."/>
            <person name="Lin X."/>
            <person name="Liu X."/>
            <person name="Mattei B."/>
            <person name="McIntosh T.C."/>
            <person name="McLeod M.P."/>
            <person name="McPherson D."/>
            <person name="Merkulov G."/>
            <person name="Milshina N.V."/>
            <person name="Mobarry C."/>
            <person name="Morris J."/>
            <person name="Moshrefi A."/>
            <person name="Mount S.M."/>
            <person name="Moy M."/>
            <person name="Murphy B."/>
            <person name="Murphy L."/>
            <person name="Muzny D.M."/>
            <person name="Nelson D.L."/>
            <person name="Nelson D.R."/>
            <person name="Nelson K.A."/>
            <person name="Nixon K."/>
            <person name="Nusskern D.R."/>
            <person name="Pacleb J.M."/>
            <person name="Palazzolo M."/>
            <person name="Pittman G.S."/>
            <person name="Pan S."/>
            <person name="Pollard J."/>
            <person name="Puri V."/>
            <person name="Reese M.G."/>
            <person name="Reinert K."/>
            <person name="Remington K."/>
            <person name="Saunders R.D.C."/>
            <person name="Scheeler F."/>
            <person name="Shen H."/>
            <person name="Shue B.C."/>
            <person name="Siden-Kiamos I."/>
            <person name="Simpson M."/>
            <person name="Skupski M.P."/>
            <person name="Smith T.J."/>
            <person name="Spier E."/>
            <person name="Spradling A.C."/>
            <person name="Stapleton M."/>
            <person name="Strong R."/>
            <person name="Sun E."/>
            <person name="Svirskas R."/>
            <person name="Tector C."/>
            <person name="Turner R."/>
            <person name="Venter E."/>
            <person name="Wang A.H."/>
            <person name="Wang X."/>
            <person name="Wang Z.-Y."/>
            <person name="Wassarman D.A."/>
            <person name="Weinstock G.M."/>
            <person name="Weissenbach J."/>
            <person name="Williams S.M."/>
            <person name="Woodage T."/>
            <person name="Worley K.C."/>
            <person name="Wu D."/>
            <person name="Yang S."/>
            <person name="Yao Q.A."/>
            <person name="Ye J."/>
            <person name="Yeh R.-F."/>
            <person name="Zaveri J.S."/>
            <person name="Zhan M."/>
            <person name="Zhang G."/>
            <person name="Zhao Q."/>
            <person name="Zheng L."/>
            <person name="Zheng X.H."/>
            <person name="Zhong F.N."/>
            <person name="Zhong W."/>
            <person name="Zhou X."/>
            <person name="Zhu S.C."/>
            <person name="Zhu X."/>
            <person name="Smith H.O."/>
            <person name="Gibbs R.A."/>
            <person name="Myers E.W."/>
            <person name="Rubin G.M."/>
            <person name="Venter J.C."/>
        </authorList>
    </citation>
    <scope>NUCLEOTIDE SEQUENCE [LARGE SCALE GENOMIC DNA]</scope>
    <source>
        <strain evidence="5">Berkeley</strain>
    </source>
</reference>
<reference evidence="9 10" key="2">
    <citation type="journal article" date="2002" name="Genome Biol.">
        <title>Annotation of the Drosophila melanogaster euchromatic genome: a systematic review.</title>
        <authorList>
            <person name="Misra S."/>
            <person name="Crosby M.A."/>
            <person name="Mungall C.J."/>
            <person name="Matthews B.B."/>
            <person name="Campbell K.S."/>
            <person name="Hradecky P."/>
            <person name="Huang Y."/>
            <person name="Kaminker J.S."/>
            <person name="Millburn G.H."/>
            <person name="Prochnik S.E."/>
            <person name="Smith C.D."/>
            <person name="Tupy J.L."/>
            <person name="Whitfield E.J."/>
            <person name="Bayraktaroglu L."/>
            <person name="Berman B.P."/>
            <person name="Bettencourt B.R."/>
            <person name="Celniker S.E."/>
            <person name="de Grey A.D.N.J."/>
            <person name="Drysdale R.A."/>
            <person name="Harris N.L."/>
            <person name="Richter J."/>
            <person name="Russo S."/>
            <person name="Schroeder A.J."/>
            <person name="Shu S.Q."/>
            <person name="Stapleton M."/>
            <person name="Yamada C."/>
            <person name="Ashburner M."/>
            <person name="Gelbart W.M."/>
            <person name="Rubin G.M."/>
            <person name="Lewis S.E."/>
        </authorList>
    </citation>
    <scope>GENOME REANNOTATION</scope>
    <scope>ALTERNATIVE SPLICING</scope>
    <source>
        <strain>Berkeley</strain>
    </source>
</reference>
<reference evidence="9 11" key="3">
    <citation type="submission" date="2003-03" db="EMBL/GenBank/DDBJ databases">
        <authorList>
            <person name="Stapleton M."/>
            <person name="Brokstein P."/>
            <person name="Hong L."/>
            <person name="Agbayani A."/>
            <person name="Carlson J.W."/>
            <person name="Champe M."/>
            <person name="Chavez C."/>
            <person name="Dorsett V."/>
            <person name="Dresnek D."/>
            <person name="Farfan D."/>
            <person name="Frise E."/>
            <person name="George R.A."/>
            <person name="Gonzalez M."/>
            <person name="Guarin H."/>
            <person name="Kronmiller B."/>
            <person name="Li P.W."/>
            <person name="Liao G."/>
            <person name="Miranda A."/>
            <person name="Mungall C.J."/>
            <person name="Nunoo J."/>
            <person name="Pacleb J.M."/>
            <person name="Paragas V."/>
            <person name="Park S."/>
            <person name="Patel S."/>
            <person name="Phouanenavong S."/>
            <person name="Wan K.H."/>
            <person name="Yu C."/>
            <person name="Lewis S.E."/>
            <person name="Rubin G.M."/>
            <person name="Celniker S.E."/>
        </authorList>
    </citation>
    <scope>NUCLEOTIDE SEQUENCE [LARGE SCALE MRNA] (ISOFORM B)</scope>
    <source>
        <strain evidence="11">Berkeley</strain>
        <tissue>Embryo</tissue>
    </source>
</reference>
<reference evidence="9" key="4">
    <citation type="journal article" date="2006" name="Genes Dev.">
        <title>A Polycomb group protein complex with sequence-specific DNA-binding and selective methyl-lysine-binding activities.</title>
        <authorList>
            <person name="Klymenko T."/>
            <person name="Papp B."/>
            <person name="Fischle W."/>
            <person name="Koecher T."/>
            <person name="Schelder M."/>
            <person name="Fritsch C."/>
            <person name="Wild B."/>
            <person name="Wilm M."/>
            <person name="Mueller J."/>
        </authorList>
    </citation>
    <scope>FUNCTION</scope>
    <scope>INTERACTION WITH PHO</scope>
    <scope>SUBCELLULAR LOCATION</scope>
    <source>
        <tissue evidence="6">Embryo</tissue>
    </source>
</reference>
<proteinExistence type="evidence at protein level"/>
<dbReference type="EMBL" id="AE014134">
    <property type="protein sequence ID" value="AAF53249.2"/>
    <property type="molecule type" value="Genomic_DNA"/>
</dbReference>
<dbReference type="EMBL" id="AE014134">
    <property type="protein sequence ID" value="AAF53250.2"/>
    <property type="molecule type" value="Genomic_DNA"/>
</dbReference>
<dbReference type="EMBL" id="BT006011">
    <property type="protein sequence ID" value="AAO74694.1"/>
    <property type="molecule type" value="mRNA"/>
</dbReference>
<dbReference type="RefSeq" id="NP_001260432.1">
    <molecule id="Q9VK33-1"/>
    <property type="nucleotide sequence ID" value="NM_001273503.1"/>
</dbReference>
<dbReference type="RefSeq" id="NP_609606.2">
    <molecule id="Q9VK33-1"/>
    <property type="nucleotide sequence ID" value="NM_135762.3"/>
</dbReference>
<dbReference type="RefSeq" id="NP_723786.1">
    <molecule id="Q9VK33-2"/>
    <property type="nucleotide sequence ID" value="NM_165026.2"/>
</dbReference>
<dbReference type="PDB" id="3H6Z">
    <property type="method" value="X-ray"/>
    <property type="resolution" value="2.80 A"/>
    <property type="chains" value="A/B=535-977"/>
</dbReference>
<dbReference type="PDB" id="4C5E">
    <property type="method" value="X-ray"/>
    <property type="resolution" value="1.95 A"/>
    <property type="chains" value="A/B/C/D=531-980"/>
</dbReference>
<dbReference type="PDB" id="4C5G">
    <property type="method" value="X-ray"/>
    <property type="resolution" value="2.10 A"/>
    <property type="chains" value="A=531-980"/>
</dbReference>
<dbReference type="PDB" id="4C5H">
    <property type="method" value="X-ray"/>
    <property type="resolution" value="3.20 A"/>
    <property type="chains" value="A=531-980"/>
</dbReference>
<dbReference type="PDB" id="5J8Y">
    <property type="method" value="X-ray"/>
    <property type="resolution" value="1.98 A"/>
    <property type="chains" value="C/D=1137-1220"/>
</dbReference>
<dbReference type="PDBsum" id="3H6Z"/>
<dbReference type="PDBsum" id="4C5E"/>
<dbReference type="PDBsum" id="4C5G"/>
<dbReference type="PDBsum" id="4C5H"/>
<dbReference type="PDBsum" id="5J8Y"/>
<dbReference type="SMR" id="Q9VK33"/>
<dbReference type="BioGRID" id="60747">
    <property type="interactions" value="25"/>
</dbReference>
<dbReference type="ComplexPortal" id="CPX-7941">
    <property type="entry name" value="PHO transcriptional repressor complex, PHO variant"/>
</dbReference>
<dbReference type="ComplexPortal" id="CPX-7942">
    <property type="entry name" value="PHO transcriptional repressor complex, PHOL variant"/>
</dbReference>
<dbReference type="FunCoup" id="Q9VK33">
    <property type="interactions" value="2310"/>
</dbReference>
<dbReference type="IntAct" id="Q9VK33">
    <property type="interactions" value="30"/>
</dbReference>
<dbReference type="MINT" id="Q9VK33"/>
<dbReference type="STRING" id="7227.FBpp0288419"/>
<dbReference type="PaxDb" id="7227-FBpp0288419"/>
<dbReference type="EnsemblMetazoa" id="FBtr0080491">
    <molecule id="Q9VK33-2"/>
    <property type="protein sequence ID" value="FBpp0080069"/>
    <property type="gene ID" value="FBgn0032475"/>
</dbReference>
<dbReference type="EnsemblMetazoa" id="FBtr0080492">
    <molecule id="Q9VK33-1"/>
    <property type="protein sequence ID" value="FBpp0080070"/>
    <property type="gene ID" value="FBgn0032475"/>
</dbReference>
<dbReference type="EnsemblMetazoa" id="FBtr0333236">
    <molecule id="Q9VK33-1"/>
    <property type="protein sequence ID" value="FBpp0305438"/>
    <property type="gene ID" value="FBgn0032475"/>
</dbReference>
<dbReference type="GeneID" id="34709"/>
<dbReference type="KEGG" id="dme:Dmel_CG16975"/>
<dbReference type="AGR" id="FB:FBgn0032475"/>
<dbReference type="CTD" id="34709"/>
<dbReference type="FlyBase" id="FBgn0032475">
    <property type="gene designation" value="Sfmbt"/>
</dbReference>
<dbReference type="VEuPathDB" id="VectorBase:FBgn0032475"/>
<dbReference type="eggNOG" id="KOG3766">
    <property type="taxonomic scope" value="Eukaryota"/>
</dbReference>
<dbReference type="GeneTree" id="ENSGT00940000169237"/>
<dbReference type="HOGENOM" id="CLU_005352_1_1_1"/>
<dbReference type="InParanoid" id="Q9VK33"/>
<dbReference type="OrthoDB" id="5800688at2759"/>
<dbReference type="Reactome" id="R-DME-4551638">
    <property type="pathway name" value="SUMOylation of chromatin organization proteins"/>
</dbReference>
<dbReference type="Reactome" id="R-DME-8953750">
    <property type="pathway name" value="Transcriptional Regulation by E2F6"/>
</dbReference>
<dbReference type="SignaLink" id="Q9VK33"/>
<dbReference type="BioGRID-ORCS" id="34709">
    <property type="hits" value="0 hits in 3 CRISPR screens"/>
</dbReference>
<dbReference type="EvolutionaryTrace" id="Q9VK33"/>
<dbReference type="GenomeRNAi" id="34709"/>
<dbReference type="PRO" id="PR:Q9VK33"/>
<dbReference type="Proteomes" id="UP000000803">
    <property type="component" value="Chromosome 2L"/>
</dbReference>
<dbReference type="Bgee" id="FBgn0032475">
    <property type="expression patterns" value="Expressed in cleaving embryo and 99 other cell types or tissues"/>
</dbReference>
<dbReference type="ExpressionAtlas" id="Q9VK33">
    <property type="expression patterns" value="baseline and differential"/>
</dbReference>
<dbReference type="GO" id="GO:0005634">
    <property type="term" value="C:nucleus"/>
    <property type="evidence" value="ECO:0000314"/>
    <property type="project" value="FlyBase"/>
</dbReference>
<dbReference type="GO" id="GO:0031519">
    <property type="term" value="C:PcG protein complex"/>
    <property type="evidence" value="ECO:0000353"/>
    <property type="project" value="FlyBase"/>
</dbReference>
<dbReference type="GO" id="GO:0003682">
    <property type="term" value="F:chromatin binding"/>
    <property type="evidence" value="ECO:0000314"/>
    <property type="project" value="FlyBase"/>
</dbReference>
<dbReference type="GO" id="GO:0003677">
    <property type="term" value="F:DNA binding"/>
    <property type="evidence" value="ECO:0007669"/>
    <property type="project" value="UniProtKB-KW"/>
</dbReference>
<dbReference type="GO" id="GO:0035064">
    <property type="term" value="F:methylated histone binding"/>
    <property type="evidence" value="ECO:0000314"/>
    <property type="project" value="FlyBase"/>
</dbReference>
<dbReference type="GO" id="GO:0008270">
    <property type="term" value="F:zinc ion binding"/>
    <property type="evidence" value="ECO:0007669"/>
    <property type="project" value="UniProtKB-KW"/>
</dbReference>
<dbReference type="GO" id="GO:0031507">
    <property type="term" value="P:heterochromatin formation"/>
    <property type="evidence" value="ECO:0000314"/>
    <property type="project" value="FlyBase"/>
</dbReference>
<dbReference type="GO" id="GO:0007446">
    <property type="term" value="P:imaginal disc growth"/>
    <property type="evidence" value="ECO:0000315"/>
    <property type="project" value="FlyBase"/>
</dbReference>
<dbReference type="GO" id="GO:0045892">
    <property type="term" value="P:negative regulation of DNA-templated transcription"/>
    <property type="evidence" value="ECO:0000318"/>
    <property type="project" value="GO_Central"/>
</dbReference>
<dbReference type="GO" id="GO:0010629">
    <property type="term" value="P:negative regulation of gene expression"/>
    <property type="evidence" value="ECO:0000315"/>
    <property type="project" value="FlyBase"/>
</dbReference>
<dbReference type="GO" id="GO:0048477">
    <property type="term" value="P:oogenesis"/>
    <property type="evidence" value="ECO:0000315"/>
    <property type="project" value="FlyBase"/>
</dbReference>
<dbReference type="CDD" id="cd20119">
    <property type="entry name" value="MBT_dSfmbt_rpt1"/>
    <property type="match status" value="1"/>
</dbReference>
<dbReference type="CDD" id="cd20122">
    <property type="entry name" value="MBT_dSfmbt_rpt2"/>
    <property type="match status" value="1"/>
</dbReference>
<dbReference type="CDD" id="cd20125">
    <property type="entry name" value="MBT_dSfmbt_rpt3"/>
    <property type="match status" value="1"/>
</dbReference>
<dbReference type="CDD" id="cd20128">
    <property type="entry name" value="MBT_dSfmbt_rpt4"/>
    <property type="match status" value="1"/>
</dbReference>
<dbReference type="CDD" id="cd09580">
    <property type="entry name" value="SAM_Scm-like-4MBT"/>
    <property type="match status" value="1"/>
</dbReference>
<dbReference type="FunFam" id="2.30.30.140:FF:000010">
    <property type="entry name" value="MBT domain-containing protein 1 isoform X1"/>
    <property type="match status" value="1"/>
</dbReference>
<dbReference type="FunFam" id="2.30.30.140:FF:000015">
    <property type="entry name" value="MBT domain-containing protein 1 isoform X1"/>
    <property type="match status" value="1"/>
</dbReference>
<dbReference type="Gene3D" id="2.30.30.140">
    <property type="match status" value="4"/>
</dbReference>
<dbReference type="Gene3D" id="3.30.60.160">
    <property type="match status" value="1"/>
</dbReference>
<dbReference type="Gene3D" id="1.10.150.50">
    <property type="entry name" value="Transcription Factor, Ets-1"/>
    <property type="match status" value="1"/>
</dbReference>
<dbReference type="InterPro" id="IPR004092">
    <property type="entry name" value="Mbt"/>
</dbReference>
<dbReference type="InterPro" id="IPR047358">
    <property type="entry name" value="MBT_dSfmbt_rpt1"/>
</dbReference>
<dbReference type="InterPro" id="IPR047359">
    <property type="entry name" value="MBT_dSfmbt_rpt2"/>
</dbReference>
<dbReference type="InterPro" id="IPR047360">
    <property type="entry name" value="MBT_dSfmbt_rpt3"/>
</dbReference>
<dbReference type="InterPro" id="IPR050548">
    <property type="entry name" value="PcG_chromatin_remod_factors"/>
</dbReference>
<dbReference type="InterPro" id="IPR001660">
    <property type="entry name" value="SAM"/>
</dbReference>
<dbReference type="InterPro" id="IPR013761">
    <property type="entry name" value="SAM/pointed_sf"/>
</dbReference>
<dbReference type="InterPro" id="IPR037605">
    <property type="entry name" value="Sfmbt_SAM"/>
</dbReference>
<dbReference type="InterPro" id="IPR012313">
    <property type="entry name" value="Znf_FCS"/>
</dbReference>
<dbReference type="InterPro" id="IPR038603">
    <property type="entry name" value="Znf_FCS_sf"/>
</dbReference>
<dbReference type="PANTHER" id="PTHR12247">
    <property type="entry name" value="POLYCOMB GROUP PROTEIN"/>
    <property type="match status" value="1"/>
</dbReference>
<dbReference type="PANTHER" id="PTHR12247:SF104">
    <property type="entry name" value="POLYCOMB PROTEIN SFMBT"/>
    <property type="match status" value="1"/>
</dbReference>
<dbReference type="Pfam" id="PF02820">
    <property type="entry name" value="MBT"/>
    <property type="match status" value="4"/>
</dbReference>
<dbReference type="Pfam" id="PF00536">
    <property type="entry name" value="SAM_1"/>
    <property type="match status" value="1"/>
</dbReference>
<dbReference type="Pfam" id="PF21319">
    <property type="entry name" value="zf-FCS_1"/>
    <property type="match status" value="1"/>
</dbReference>
<dbReference type="SMART" id="SM00561">
    <property type="entry name" value="MBT"/>
    <property type="match status" value="4"/>
</dbReference>
<dbReference type="SMART" id="SM00454">
    <property type="entry name" value="SAM"/>
    <property type="match status" value="1"/>
</dbReference>
<dbReference type="SUPFAM" id="SSF47769">
    <property type="entry name" value="SAM/Pointed domain"/>
    <property type="match status" value="1"/>
</dbReference>
<dbReference type="SUPFAM" id="SSF63748">
    <property type="entry name" value="Tudor/PWWP/MBT"/>
    <property type="match status" value="4"/>
</dbReference>
<dbReference type="PROSITE" id="PS51079">
    <property type="entry name" value="MBT"/>
    <property type="match status" value="4"/>
</dbReference>
<dbReference type="PROSITE" id="PS50105">
    <property type="entry name" value="SAM_DOMAIN"/>
    <property type="match status" value="1"/>
</dbReference>
<dbReference type="PROSITE" id="PS51024">
    <property type="entry name" value="ZF_FCS"/>
    <property type="match status" value="1"/>
</dbReference>
<keyword id="KW-0002">3D-structure</keyword>
<keyword id="KW-0025">Alternative splicing</keyword>
<keyword id="KW-0156">Chromatin regulator</keyword>
<keyword id="KW-0238">DNA-binding</keyword>
<keyword id="KW-0479">Metal-binding</keyword>
<keyword id="KW-0539">Nucleus</keyword>
<keyword id="KW-1185">Reference proteome</keyword>
<keyword id="KW-0677">Repeat</keyword>
<keyword id="KW-0678">Repressor</keyword>
<keyword id="KW-0804">Transcription</keyword>
<keyword id="KW-0805">Transcription regulation</keyword>
<keyword id="KW-0862">Zinc</keyword>
<keyword id="KW-0863">Zinc-finger</keyword>
<accession>Q9VK33</accession>
<accession>Q7KTB5</accession>
<accession>Q9VK32</accession>
<protein>
    <recommendedName>
        <fullName>Polycomb protein Sfmbt</fullName>
    </recommendedName>
    <alternativeName>
        <fullName>Scm-like with four MBT domain-containing protein 1</fullName>
    </alternativeName>
    <alternativeName>
        <fullName>dSfmbt</fullName>
    </alternativeName>
</protein>
<evidence type="ECO:0000255" key="1"/>
<evidence type="ECO:0000255" key="2">
    <source>
        <dbReference type="PROSITE-ProRule" id="PRU00184"/>
    </source>
</evidence>
<evidence type="ECO:0000255" key="3">
    <source>
        <dbReference type="PROSITE-ProRule" id="PRU00367"/>
    </source>
</evidence>
<evidence type="ECO:0000256" key="4">
    <source>
        <dbReference type="SAM" id="MobiDB-lite"/>
    </source>
</evidence>
<evidence type="ECO:0000269" key="5">
    <source>
    </source>
</evidence>
<evidence type="ECO:0000269" key="6">
    <source>
    </source>
</evidence>
<evidence type="ECO:0000303" key="7">
    <source>
    </source>
</evidence>
<evidence type="ECO:0000303" key="8">
    <source>
    </source>
</evidence>
<evidence type="ECO:0000305" key="9"/>
<evidence type="ECO:0000312" key="10">
    <source>
        <dbReference type="EMBL" id="AAF53249.2"/>
    </source>
</evidence>
<evidence type="ECO:0000312" key="11">
    <source>
        <dbReference type="EMBL" id="AAO74694.1"/>
    </source>
</evidence>
<evidence type="ECO:0007829" key="12">
    <source>
        <dbReference type="PDB" id="3H6Z"/>
    </source>
</evidence>
<evidence type="ECO:0007829" key="13">
    <source>
        <dbReference type="PDB" id="4C5E"/>
    </source>
</evidence>
<evidence type="ECO:0007829" key="14">
    <source>
        <dbReference type="PDB" id="4C5H"/>
    </source>
</evidence>
<evidence type="ECO:0007829" key="15">
    <source>
        <dbReference type="PDB" id="5J8Y"/>
    </source>
</evidence>
<sequence>MNPSELRMMWMSSQYNSERITLEDAATLLGHPTVGLSVMEDLSAHQPTLDMNPMMSLMGGDFTGQAAATAAALGVQPGTLIATNSNNLYGFAHMGGLQQQLLQQSAAAAVFQNYAEAMDNDVENGMVGMAMEAVVDDDDQVYGQRDNNFDDNGSELEPKQEIINIDDFVMMNEDNNSYDGTDFMTSSDKDISQSSSSCMAQMPGSLGVPGVEHDLLVPLPDGLLHHKLLGTTLVPAMGTLNGNAFGNIMVSTENTSSKQMQRTYSTAKGANSTATTATCSASTSSALRSQRKTRKIEPVNRPGLVLKTPIAYRGNIDPSVIPIQKDGMAVCKRCGAIGVKHTFYTKSRRFCSMACARGELYSLVLNTKMEGDQATTSSPDPGAGSESADLPGDQQQSQSDIELDLHAAHIKNANYRFRITDQSKITQLNSFGEPMSMGGDAAANNVQMAADETIAALNGGAVGDATAPGSTEEGASTPNSYLSAAPTPKALRLFKDIYPQDDLPQIPKYERLPVPCPQMEKIISIRRRMYDPTHSYDWLPRLSKENFNAAPVTCFPHAPGCEVWDNLGVGMKVEVENTDCDSIEVIQPGQTPTSFWVATILEIKGYKALMSYEGFDTDSHDFWVNLCNAEVHSVGWCATRGKPLIPPRTIEHKYKDWKDFLVGRLSGARTLPSNFYNKINDSLQSRFRLGLNLECVDKDRISQVRLATVTKIVGKRLFLRYFDSDDGFWCHEDSPIIHPVGWATTVGHNLAAPQDYLERMLAGREAMIEVHEDDATIELFKMNFTFDEYYSDGKTNSFVEGMKLEAVDPLNLSSICPATVMAVLKFGYMMIRIDSYQPDASGSDWFCYHEKSPCIFPAGFCSVNNISVTPPNGYDSRTFTWEGYLRDTGAVAAGQHLFHRIIPDHGFEVGMSLECADLMDPRLVCVATVARVVGRLLKVHFDGWTDEYDQWLDCESADIYPVGWCVLVNHKLEGPPRVAHQQAPKPAPKPKIQRKRKPKKGAAGGKTPTDNNTQSVKSRTIALKTTPHLPKLSIKLELKPEHHNAAFYENNQPEEEGDEEDPDADGDGDGSTSHISEQSTTQSSSDLIAGSGSGSGSASLVTLATGSNKTNSSATNNKYIPRLADIDSSEPHLELVPDTWNVYDVSQFLRVNDCTAHCDTFSRNKIDGKRLLQLTKDDIMPLLGMKVGPALKISDLIAQLKCKVNPGRARSHKTNKSPFL</sequence>
<gene>
    <name evidence="8" type="primary">Sfmbt</name>
    <name type="ORF">CG16975</name>
</gene>
<comment type="function">
    <text evidence="6">Polycomb group (PcG) protein that binds to the Polycomb response elements (PREs) found in the regulatory regions of many genes. PcG proteins act by forming multiprotein complexes, which are required to maintain the transcriptionally repressive state of homeotic genes throughout development. PcG proteins are not required to initiate repression, but to maintain it during later stages of development. They probably act via the methylation of histones, rendering chromatin heritably changed in its expressibility. Necessary but not sufficient to recruit a functional PcG repressive complex that represses target genes, suggesting that the recruitment of the distinct PRC1 complex is also required to allow a subsequent repression.</text>
</comment>
<comment type="subunit">
    <text evidence="6">Interacts with pho as a component of the pho-repressive complex (PhoRC).</text>
</comment>
<comment type="interaction">
    <interactant intactId="EBI-117801">
        <id>Q9VK33</id>
    </interactant>
    <interactant intactId="EBI-125201">
        <id>Q8ST83</id>
        <label>pho</label>
    </interactant>
    <organismsDiffer>false</organismsDiffer>
    <experiments>8</experiments>
</comment>
<comment type="interaction">
    <interactant intactId="EBI-117801">
        <id>Q9VK33</id>
    </interactant>
    <interactant intactId="EBI-176113">
        <id>Q9VSZ3</id>
        <label>phol</label>
    </interactant>
    <organismsDiffer>false</organismsDiffer>
    <experiments>2</experiments>
</comment>
<comment type="interaction">
    <interactant intactId="EBI-117801">
        <id>Q9VK33</id>
    </interactant>
    <interactant intactId="EBI-120658">
        <id>P84243</id>
        <label>H3-3B</label>
    </interactant>
    <organismsDiffer>true</organismsDiffer>
    <experiments>15</experiments>
</comment>
<comment type="interaction">
    <interactant intactId="EBI-117801">
        <id>Q9VK33</id>
    </interactant>
    <interactant intactId="EBI-302023">
        <id>P62805</id>
        <label>H4C9</label>
    </interactant>
    <organismsDiffer>true</organismsDiffer>
    <experiments>10</experiments>
</comment>
<comment type="subcellular location">
    <subcellularLocation>
        <location evidence="6">Nucleus</location>
    </subcellularLocation>
</comment>
<comment type="alternative products">
    <event type="alternative splicing"/>
    <isoform>
        <id>Q9VK33-1</id>
        <name evidence="5">B</name>
        <sequence type="displayed"/>
    </isoform>
    <isoform>
        <id>Q9VK33-2</id>
        <name evidence="5">A</name>
        <sequence type="described" ref="VSP_052548"/>
    </isoform>
</comment>
<comment type="domain">
    <text>MBT repeats have unique discriminatory binding activity for methylated Lys residues in H3 and H4; the MBT repeats bind mono- and dimethylated H3K9Me1, H3K9Me2, H4K20Me1 and H4K20Me2 but fail to interact with these residues if they are unmodified or trimethylated.</text>
</comment>
<feature type="chain" id="PRO_0000306371" description="Polycomb protein Sfmbt">
    <location>
        <begin position="1"/>
        <end position="1220"/>
    </location>
</feature>
<feature type="repeat" description="MBT 1" evidence="1">
    <location>
        <begin position="536"/>
        <end position="647"/>
    </location>
</feature>
<feature type="repeat" description="MBT 2" evidence="1">
    <location>
        <begin position="655"/>
        <end position="753"/>
    </location>
</feature>
<feature type="repeat" description="MBT 3" evidence="1">
    <location>
        <begin position="761"/>
        <end position="871"/>
    </location>
</feature>
<feature type="repeat" description="MBT 4" evidence="1">
    <location>
        <begin position="879"/>
        <end position="975"/>
    </location>
</feature>
<feature type="domain" description="SAM" evidence="2">
    <location>
        <begin position="1140"/>
        <end position="1203"/>
    </location>
</feature>
<feature type="zinc finger region" description="FCS-type" evidence="3">
    <location>
        <begin position="322"/>
        <end position="357"/>
    </location>
</feature>
<feature type="region of interest" description="Disordered" evidence="4">
    <location>
        <begin position="371"/>
        <end position="399"/>
    </location>
</feature>
<feature type="region of interest" description="Disordered" evidence="4">
    <location>
        <begin position="464"/>
        <end position="483"/>
    </location>
</feature>
<feature type="region of interest" description="Disordered" evidence="4">
    <location>
        <begin position="976"/>
        <end position="1024"/>
    </location>
</feature>
<feature type="region of interest" description="Disordered" evidence="4">
    <location>
        <begin position="1050"/>
        <end position="1092"/>
    </location>
</feature>
<feature type="compositionally biased region" description="Polar residues" evidence="4">
    <location>
        <begin position="473"/>
        <end position="482"/>
    </location>
</feature>
<feature type="compositionally biased region" description="Basic residues" evidence="4">
    <location>
        <begin position="991"/>
        <end position="1000"/>
    </location>
</feature>
<feature type="compositionally biased region" description="Acidic residues" evidence="4">
    <location>
        <begin position="1052"/>
        <end position="1068"/>
    </location>
</feature>
<feature type="compositionally biased region" description="Polar residues" evidence="4">
    <location>
        <begin position="1071"/>
        <end position="1082"/>
    </location>
</feature>
<feature type="compositionally biased region" description="Low complexity" evidence="4">
    <location>
        <begin position="1083"/>
        <end position="1092"/>
    </location>
</feature>
<feature type="binding site" evidence="3">
    <location>
        <position position="331"/>
    </location>
    <ligand>
        <name>Zn(2+)</name>
        <dbReference type="ChEBI" id="CHEBI:29105"/>
    </ligand>
</feature>
<feature type="binding site" evidence="3">
    <location>
        <position position="334"/>
    </location>
    <ligand>
        <name>Zn(2+)</name>
        <dbReference type="ChEBI" id="CHEBI:29105"/>
    </ligand>
</feature>
<feature type="binding site" evidence="3">
    <location>
        <position position="351"/>
    </location>
    <ligand>
        <name>Zn(2+)</name>
        <dbReference type="ChEBI" id="CHEBI:29105"/>
    </ligand>
</feature>
<feature type="binding site" evidence="3">
    <location>
        <position position="355"/>
    </location>
    <ligand>
        <name>Zn(2+)</name>
        <dbReference type="ChEBI" id="CHEBI:29105"/>
    </ligand>
</feature>
<feature type="splice variant" id="VSP_052548" description="In isoform A." evidence="7">
    <location>
        <begin position="1"/>
        <end position="352"/>
    </location>
</feature>
<feature type="helix" evidence="13">
    <location>
        <begin position="539"/>
        <end position="542"/>
    </location>
</feature>
<feature type="helix" evidence="13">
    <location>
        <begin position="552"/>
        <end position="554"/>
    </location>
</feature>
<feature type="helix" evidence="13">
    <location>
        <begin position="561"/>
        <end position="566"/>
    </location>
</feature>
<feature type="strand" evidence="13">
    <location>
        <begin position="572"/>
        <end position="576"/>
    </location>
</feature>
<feature type="strand" evidence="13">
    <location>
        <begin position="595"/>
        <end position="604"/>
    </location>
</feature>
<feature type="strand" evidence="13">
    <location>
        <begin position="607"/>
        <end position="612"/>
    </location>
</feature>
<feature type="strand" evidence="13">
    <location>
        <begin position="616"/>
        <end position="618"/>
    </location>
</feature>
<feature type="strand" evidence="13">
    <location>
        <begin position="622"/>
        <end position="625"/>
    </location>
</feature>
<feature type="turn" evidence="13">
    <location>
        <begin position="626"/>
        <end position="628"/>
    </location>
</feature>
<feature type="strand" evidence="14">
    <location>
        <begin position="629"/>
        <end position="633"/>
    </location>
</feature>
<feature type="helix" evidence="13">
    <location>
        <begin position="636"/>
        <end position="639"/>
    </location>
</feature>
<feature type="turn" evidence="13">
    <location>
        <begin position="648"/>
        <end position="652"/>
    </location>
</feature>
<feature type="helix" evidence="13">
    <location>
        <begin position="658"/>
        <end position="665"/>
    </location>
</feature>
<feature type="helix" evidence="13">
    <location>
        <begin position="675"/>
        <end position="681"/>
    </location>
</feature>
<feature type="strand" evidence="13">
    <location>
        <begin position="692"/>
        <end position="697"/>
    </location>
</feature>
<feature type="strand" evidence="13">
    <location>
        <begin position="700"/>
        <end position="713"/>
    </location>
</feature>
<feature type="strand" evidence="13">
    <location>
        <begin position="716"/>
        <end position="721"/>
    </location>
</feature>
<feature type="strand" evidence="13">
    <location>
        <begin position="727"/>
        <end position="731"/>
    </location>
</feature>
<feature type="helix" evidence="13">
    <location>
        <begin position="742"/>
        <end position="746"/>
    </location>
</feature>
<feature type="strand" evidence="13">
    <location>
        <begin position="749"/>
        <end position="751"/>
    </location>
</feature>
<feature type="helix" evidence="13">
    <location>
        <begin position="754"/>
        <end position="761"/>
    </location>
</feature>
<feature type="turn" evidence="12">
    <location>
        <begin position="762"/>
        <end position="766"/>
    </location>
</feature>
<feature type="helix" evidence="13">
    <location>
        <begin position="777"/>
        <end position="779"/>
    </location>
</feature>
<feature type="helix" evidence="13">
    <location>
        <begin position="786"/>
        <end position="788"/>
    </location>
</feature>
<feature type="strand" evidence="13">
    <location>
        <begin position="803"/>
        <end position="808"/>
    </location>
</feature>
<feature type="strand" evidence="13">
    <location>
        <begin position="811"/>
        <end position="823"/>
    </location>
</feature>
<feature type="strand" evidence="13">
    <location>
        <begin position="828"/>
        <end position="833"/>
    </location>
</feature>
<feature type="turn" evidence="12">
    <location>
        <begin position="841"/>
        <end position="844"/>
    </location>
</feature>
<feature type="strand" evidence="13">
    <location>
        <begin position="846"/>
        <end position="849"/>
    </location>
</feature>
<feature type="helix" evidence="13">
    <location>
        <begin position="860"/>
        <end position="863"/>
    </location>
</feature>
<feature type="turn" evidence="13">
    <location>
        <begin position="876"/>
        <end position="878"/>
    </location>
</feature>
<feature type="helix" evidence="13">
    <location>
        <begin position="881"/>
        <end position="888"/>
    </location>
</feature>
<feature type="helix" evidence="13">
    <location>
        <begin position="895"/>
        <end position="897"/>
    </location>
</feature>
<feature type="strand" evidence="13">
    <location>
        <begin position="912"/>
        <end position="916"/>
    </location>
</feature>
<feature type="strand" evidence="13">
    <location>
        <begin position="924"/>
        <end position="933"/>
    </location>
</feature>
<feature type="strand" evidence="13">
    <location>
        <begin position="936"/>
        <end position="941"/>
    </location>
</feature>
<feature type="helix" evidence="13">
    <location>
        <begin position="946"/>
        <end position="948"/>
    </location>
</feature>
<feature type="strand" evidence="13">
    <location>
        <begin position="950"/>
        <end position="953"/>
    </location>
</feature>
<feature type="helix" evidence="13">
    <location>
        <begin position="964"/>
        <end position="968"/>
    </location>
</feature>
<feature type="helix" evidence="15">
    <location>
        <begin position="1137"/>
        <end position="1139"/>
    </location>
</feature>
<feature type="helix" evidence="15">
    <location>
        <begin position="1142"/>
        <end position="1151"/>
    </location>
</feature>
<feature type="helix" evidence="15">
    <location>
        <begin position="1155"/>
        <end position="1157"/>
    </location>
</feature>
<feature type="helix" evidence="15">
    <location>
        <begin position="1158"/>
        <end position="1163"/>
    </location>
</feature>
<feature type="helix" evidence="15">
    <location>
        <begin position="1168"/>
        <end position="1171"/>
    </location>
</feature>
<feature type="helix" evidence="15">
    <location>
        <begin position="1176"/>
        <end position="1182"/>
    </location>
</feature>
<feature type="turn" evidence="15">
    <location>
        <begin position="1183"/>
        <end position="1185"/>
    </location>
</feature>
<feature type="helix" evidence="15">
    <location>
        <begin position="1187"/>
        <end position="1202"/>
    </location>
</feature>